<reference key="1">
    <citation type="submission" date="2006-03" db="EMBL/GenBank/DDBJ databases">
        <title>Complete genome sequence of Gemmatimonas aurantiaca T-27 that represents a novel phylum Gemmatimonadetes.</title>
        <authorList>
            <person name="Takasaki K."/>
            <person name="Ichikawa N."/>
            <person name="Miura H."/>
            <person name="Matsushita S."/>
            <person name="Watanabe Y."/>
            <person name="Oguchi A."/>
            <person name="Ankai A."/>
            <person name="Yashiro I."/>
            <person name="Takahashi M."/>
            <person name="Terui Y."/>
            <person name="Fukui S."/>
            <person name="Yokoyama H."/>
            <person name="Tanikawa S."/>
            <person name="Hanada S."/>
            <person name="Kamagata Y."/>
            <person name="Fujita N."/>
        </authorList>
    </citation>
    <scope>NUCLEOTIDE SEQUENCE [LARGE SCALE GENOMIC DNA]</scope>
    <source>
        <strain>DSM 14586 / JCM 11422 / NBRC 100505 / T-27</strain>
    </source>
</reference>
<protein>
    <recommendedName>
        <fullName evidence="1">Chaperonin GroEL</fullName>
        <ecNumber evidence="1">5.6.1.7</ecNumber>
    </recommendedName>
    <alternativeName>
        <fullName evidence="1">60 kDa chaperonin</fullName>
    </alternativeName>
    <alternativeName>
        <fullName evidence="1">Chaperonin-60</fullName>
        <shortName evidence="1">Cpn60</shortName>
    </alternativeName>
</protein>
<evidence type="ECO:0000255" key="1">
    <source>
        <dbReference type="HAMAP-Rule" id="MF_00600"/>
    </source>
</evidence>
<proteinExistence type="inferred from homology"/>
<name>CH60_GEMAT</name>
<comment type="function">
    <text evidence="1">Together with its co-chaperonin GroES, plays an essential role in assisting protein folding. The GroEL-GroES system forms a nano-cage that allows encapsulation of the non-native substrate proteins and provides a physical environment optimized to promote and accelerate protein folding.</text>
</comment>
<comment type="catalytic activity">
    <reaction evidence="1">
        <text>ATP + H2O + a folded polypeptide = ADP + phosphate + an unfolded polypeptide.</text>
        <dbReference type="EC" id="5.6.1.7"/>
    </reaction>
</comment>
<comment type="subunit">
    <text evidence="1">Forms a cylinder of 14 subunits composed of two heptameric rings stacked back-to-back. Interacts with the co-chaperonin GroES.</text>
</comment>
<comment type="subcellular location">
    <subcellularLocation>
        <location evidence="1">Cytoplasm</location>
    </subcellularLocation>
</comment>
<comment type="similarity">
    <text evidence="1">Belongs to the chaperonin (HSP60) family.</text>
</comment>
<sequence length="543" mass="57744">MAAKELHFNVDARAALKRGVDQLAEAVKVTLGPKGRNVVIDKKFGAPTVTKDGVTVAKEIELADPIENMGAQMVKEVATKTSDLAGDGTTTATVLAQAIFREGLKNVTAGSNPMALKRGIEKAVAGIVEELKRISVPTTGKKEIAQVGTISANNDPEIGNLIAEAMEKVGKDGVITVEEAKGLETTLETVDGMQFDRGYLSPYFVTDPEKMEAVLENALILIHDKKISAMKDLLPALEKVAQLGKPLLIIAEDVEGEALATLVVNKLRGTLRICAVKAPGFGDRRKAMLQDIATLTKGQVISDEVGFKLENAVLTDLGSAKRIVIDKDNTTIIDGAGEQKDIEGRVREIRGAIDKSTSDYDREKLQERLAKLAGGVAVINVGAATEAEMKEKKARVEDALHATRAAVEEGIVPGGGVALIRAQHVLKDVKVAERDEQIGVDIVRRAIEEPLRMIVQNAGGEGSIVVEKIRTAKETSFGYNALTDVYEDLVQAGVIDPTKVTRTALQNAASIAGLLLTTEALIVEKKEDKPAAPAGGPGMGGMY</sequence>
<keyword id="KW-0067">ATP-binding</keyword>
<keyword id="KW-0143">Chaperone</keyword>
<keyword id="KW-0963">Cytoplasm</keyword>
<keyword id="KW-0413">Isomerase</keyword>
<keyword id="KW-0547">Nucleotide-binding</keyword>
<keyword id="KW-1185">Reference proteome</keyword>
<organism>
    <name type="scientific">Gemmatimonas aurantiaca (strain DSM 14586 / JCM 11422 / NBRC 100505 / T-27)</name>
    <dbReference type="NCBI Taxonomy" id="379066"/>
    <lineage>
        <taxon>Bacteria</taxon>
        <taxon>Pseudomonadati</taxon>
        <taxon>Gemmatimonadota</taxon>
        <taxon>Gemmatimonadia</taxon>
        <taxon>Gemmatimonadales</taxon>
        <taxon>Gemmatimonadaceae</taxon>
        <taxon>Gemmatimonas</taxon>
    </lineage>
</organism>
<accession>C1A8L8</accession>
<gene>
    <name evidence="1" type="primary">groEL</name>
    <name evidence="1" type="synonym">groL</name>
    <name type="ordered locus">GAU_1536</name>
</gene>
<feature type="chain" id="PRO_1000212200" description="Chaperonin GroEL">
    <location>
        <begin position="1"/>
        <end position="543"/>
    </location>
</feature>
<feature type="binding site" evidence="1">
    <location>
        <begin position="30"/>
        <end position="33"/>
    </location>
    <ligand>
        <name>ATP</name>
        <dbReference type="ChEBI" id="CHEBI:30616"/>
    </ligand>
</feature>
<feature type="binding site" evidence="1">
    <location>
        <position position="51"/>
    </location>
    <ligand>
        <name>ATP</name>
        <dbReference type="ChEBI" id="CHEBI:30616"/>
    </ligand>
</feature>
<feature type="binding site" evidence="1">
    <location>
        <begin position="87"/>
        <end position="91"/>
    </location>
    <ligand>
        <name>ATP</name>
        <dbReference type="ChEBI" id="CHEBI:30616"/>
    </ligand>
</feature>
<feature type="binding site" evidence="1">
    <location>
        <position position="415"/>
    </location>
    <ligand>
        <name>ATP</name>
        <dbReference type="ChEBI" id="CHEBI:30616"/>
    </ligand>
</feature>
<feature type="binding site" evidence="1">
    <location>
        <begin position="480"/>
        <end position="482"/>
    </location>
    <ligand>
        <name>ATP</name>
        <dbReference type="ChEBI" id="CHEBI:30616"/>
    </ligand>
</feature>
<feature type="binding site" evidence="1">
    <location>
        <position position="496"/>
    </location>
    <ligand>
        <name>ATP</name>
        <dbReference type="ChEBI" id="CHEBI:30616"/>
    </ligand>
</feature>
<dbReference type="EC" id="5.6.1.7" evidence="1"/>
<dbReference type="EMBL" id="AP009153">
    <property type="protein sequence ID" value="BAH38578.1"/>
    <property type="molecule type" value="Genomic_DNA"/>
</dbReference>
<dbReference type="RefSeq" id="WP_012683025.1">
    <property type="nucleotide sequence ID" value="NC_012489.1"/>
</dbReference>
<dbReference type="SMR" id="C1A8L8"/>
<dbReference type="STRING" id="379066.GAU_1536"/>
<dbReference type="KEGG" id="gau:GAU_1536"/>
<dbReference type="eggNOG" id="COG0459">
    <property type="taxonomic scope" value="Bacteria"/>
</dbReference>
<dbReference type="HOGENOM" id="CLU_016503_3_0_0"/>
<dbReference type="OrthoDB" id="9766614at2"/>
<dbReference type="Proteomes" id="UP000002209">
    <property type="component" value="Chromosome"/>
</dbReference>
<dbReference type="GO" id="GO:0005737">
    <property type="term" value="C:cytoplasm"/>
    <property type="evidence" value="ECO:0007669"/>
    <property type="project" value="UniProtKB-SubCell"/>
</dbReference>
<dbReference type="GO" id="GO:0005524">
    <property type="term" value="F:ATP binding"/>
    <property type="evidence" value="ECO:0007669"/>
    <property type="project" value="UniProtKB-UniRule"/>
</dbReference>
<dbReference type="GO" id="GO:0140662">
    <property type="term" value="F:ATP-dependent protein folding chaperone"/>
    <property type="evidence" value="ECO:0007669"/>
    <property type="project" value="InterPro"/>
</dbReference>
<dbReference type="GO" id="GO:0016853">
    <property type="term" value="F:isomerase activity"/>
    <property type="evidence" value="ECO:0007669"/>
    <property type="project" value="UniProtKB-KW"/>
</dbReference>
<dbReference type="GO" id="GO:0051082">
    <property type="term" value="F:unfolded protein binding"/>
    <property type="evidence" value="ECO:0007669"/>
    <property type="project" value="UniProtKB-UniRule"/>
</dbReference>
<dbReference type="GO" id="GO:0042026">
    <property type="term" value="P:protein refolding"/>
    <property type="evidence" value="ECO:0007669"/>
    <property type="project" value="UniProtKB-UniRule"/>
</dbReference>
<dbReference type="CDD" id="cd03344">
    <property type="entry name" value="GroEL"/>
    <property type="match status" value="1"/>
</dbReference>
<dbReference type="FunFam" id="1.10.560.10:FF:000001">
    <property type="entry name" value="60 kDa chaperonin"/>
    <property type="match status" value="1"/>
</dbReference>
<dbReference type="FunFam" id="3.50.7.10:FF:000001">
    <property type="entry name" value="60 kDa chaperonin"/>
    <property type="match status" value="1"/>
</dbReference>
<dbReference type="Gene3D" id="3.50.7.10">
    <property type="entry name" value="GroEL"/>
    <property type="match status" value="1"/>
</dbReference>
<dbReference type="Gene3D" id="1.10.560.10">
    <property type="entry name" value="GroEL-like equatorial domain"/>
    <property type="match status" value="1"/>
</dbReference>
<dbReference type="Gene3D" id="3.30.260.10">
    <property type="entry name" value="TCP-1-like chaperonin intermediate domain"/>
    <property type="match status" value="1"/>
</dbReference>
<dbReference type="HAMAP" id="MF_00600">
    <property type="entry name" value="CH60"/>
    <property type="match status" value="1"/>
</dbReference>
<dbReference type="InterPro" id="IPR018370">
    <property type="entry name" value="Chaperonin_Cpn60_CS"/>
</dbReference>
<dbReference type="InterPro" id="IPR001844">
    <property type="entry name" value="Cpn60/GroEL"/>
</dbReference>
<dbReference type="InterPro" id="IPR002423">
    <property type="entry name" value="Cpn60/GroEL/TCP-1"/>
</dbReference>
<dbReference type="InterPro" id="IPR027409">
    <property type="entry name" value="GroEL-like_apical_dom_sf"/>
</dbReference>
<dbReference type="InterPro" id="IPR027413">
    <property type="entry name" value="GROEL-like_equatorial_sf"/>
</dbReference>
<dbReference type="InterPro" id="IPR027410">
    <property type="entry name" value="TCP-1-like_intermed_sf"/>
</dbReference>
<dbReference type="NCBIfam" id="TIGR02348">
    <property type="entry name" value="GroEL"/>
    <property type="match status" value="1"/>
</dbReference>
<dbReference type="NCBIfam" id="NF000592">
    <property type="entry name" value="PRK00013.1"/>
    <property type="match status" value="1"/>
</dbReference>
<dbReference type="NCBIfam" id="NF009487">
    <property type="entry name" value="PRK12849.1"/>
    <property type="match status" value="1"/>
</dbReference>
<dbReference type="NCBIfam" id="NF009488">
    <property type="entry name" value="PRK12850.1"/>
    <property type="match status" value="1"/>
</dbReference>
<dbReference type="NCBIfam" id="NF009489">
    <property type="entry name" value="PRK12851.1"/>
    <property type="match status" value="1"/>
</dbReference>
<dbReference type="PANTHER" id="PTHR45633">
    <property type="entry name" value="60 KDA HEAT SHOCK PROTEIN, MITOCHONDRIAL"/>
    <property type="match status" value="1"/>
</dbReference>
<dbReference type="Pfam" id="PF00118">
    <property type="entry name" value="Cpn60_TCP1"/>
    <property type="match status" value="1"/>
</dbReference>
<dbReference type="PRINTS" id="PR00298">
    <property type="entry name" value="CHAPERONIN60"/>
</dbReference>
<dbReference type="SUPFAM" id="SSF52029">
    <property type="entry name" value="GroEL apical domain-like"/>
    <property type="match status" value="1"/>
</dbReference>
<dbReference type="SUPFAM" id="SSF48592">
    <property type="entry name" value="GroEL equatorial domain-like"/>
    <property type="match status" value="1"/>
</dbReference>
<dbReference type="SUPFAM" id="SSF54849">
    <property type="entry name" value="GroEL-intermediate domain like"/>
    <property type="match status" value="1"/>
</dbReference>
<dbReference type="PROSITE" id="PS00296">
    <property type="entry name" value="CHAPERONINS_CPN60"/>
    <property type="match status" value="1"/>
</dbReference>